<evidence type="ECO:0000255" key="1">
    <source>
        <dbReference type="PROSITE-ProRule" id="PRU00448"/>
    </source>
</evidence>
<evidence type="ECO:0000256" key="2">
    <source>
        <dbReference type="SAM" id="MobiDB-lite"/>
    </source>
</evidence>
<evidence type="ECO:0000269" key="3">
    <source>
    </source>
</evidence>
<evidence type="ECO:0000269" key="4">
    <source>
    </source>
</evidence>
<gene>
    <name type="primary">Mlc2</name>
    <name type="ORF">CG2184</name>
</gene>
<comment type="subunit">
    <text>Myosin is a hexamer of 2 heavy chains and 4 light chains.</text>
</comment>
<comment type="miscellaneous">
    <text>This chain binds calcium.</text>
</comment>
<comment type="miscellaneous">
    <text>MLC2 has at least two isoforms in each type of muscle and the isoforms of tubular muscle differ slightly from those of fibrillar muscle. These isoforms may arise through post-translational modifications.</text>
</comment>
<proteinExistence type="evidence at protein level"/>
<keyword id="KW-0007">Acetylation</keyword>
<keyword id="KW-0106">Calcium</keyword>
<keyword id="KW-0479">Metal-binding</keyword>
<keyword id="KW-0505">Motor protein</keyword>
<keyword id="KW-0514">Muscle protein</keyword>
<keyword id="KW-0518">Myosin</keyword>
<keyword id="KW-0597">Phosphoprotein</keyword>
<keyword id="KW-1185">Reference proteome</keyword>
<keyword id="KW-0677">Repeat</keyword>
<protein>
    <recommendedName>
        <fullName>Myosin regulatory light chain 2</fullName>
        <shortName>MLC-2</shortName>
    </recommendedName>
</protein>
<organism>
    <name type="scientific">Drosophila melanogaster</name>
    <name type="common">Fruit fly</name>
    <dbReference type="NCBI Taxonomy" id="7227"/>
    <lineage>
        <taxon>Eukaryota</taxon>
        <taxon>Metazoa</taxon>
        <taxon>Ecdysozoa</taxon>
        <taxon>Arthropoda</taxon>
        <taxon>Hexapoda</taxon>
        <taxon>Insecta</taxon>
        <taxon>Pterygota</taxon>
        <taxon>Neoptera</taxon>
        <taxon>Endopterygota</taxon>
        <taxon>Diptera</taxon>
        <taxon>Brachycera</taxon>
        <taxon>Muscomorpha</taxon>
        <taxon>Ephydroidea</taxon>
        <taxon>Drosophilidae</taxon>
        <taxon>Drosophila</taxon>
        <taxon>Sophophora</taxon>
    </lineage>
</organism>
<accession>P18432</accession>
<accession>Q9VA98</accession>
<name>MLR_DROME</name>
<sequence length="222" mass="23714">MADEKKKVKKKKTKEEGGTSETASEAASEAATPAPAATPAPAASATGSKRASGGSRGSRKSKRAGSSVFSVFSQKQIAEFKEAFQLMDADKDGIIGKNDLRAAFDSVGKIANDKELDAMLGEASGPINFTQLLTLFANRMATSGANDEDEVVIAAFKTFDNDGLIDGDKFREMLMNFGDKFTMKEVDDAYDQMVIDDKNQIDTAALIEMLTGKGEEEEEEAA</sequence>
<feature type="initiator methionine" description="Removed" evidence="4">
    <location>
        <position position="1"/>
    </location>
</feature>
<feature type="chain" id="PRO_0000198746" description="Myosin regulatory light chain 2">
    <location>
        <begin position="2"/>
        <end position="222"/>
    </location>
</feature>
<feature type="domain" description="EF-hand 1" evidence="1">
    <location>
        <begin position="75"/>
        <end position="110"/>
    </location>
</feature>
<feature type="domain" description="EF-hand 2" evidence="1">
    <location>
        <begin position="147"/>
        <end position="180"/>
    </location>
</feature>
<feature type="domain" description="EF-hand 3" evidence="1">
    <location>
        <begin position="181"/>
        <end position="216"/>
    </location>
</feature>
<feature type="region of interest" description="Disordered" evidence="2">
    <location>
        <begin position="1"/>
        <end position="65"/>
    </location>
</feature>
<feature type="compositionally biased region" description="Low complexity" evidence="2">
    <location>
        <begin position="19"/>
        <end position="53"/>
    </location>
</feature>
<feature type="binding site" evidence="1">
    <location>
        <position position="88"/>
    </location>
    <ligand>
        <name>Ca(2+)</name>
        <dbReference type="ChEBI" id="CHEBI:29108"/>
    </ligand>
</feature>
<feature type="binding site" evidence="1">
    <location>
        <position position="90"/>
    </location>
    <ligand>
        <name>Ca(2+)</name>
        <dbReference type="ChEBI" id="CHEBI:29108"/>
    </ligand>
</feature>
<feature type="binding site" evidence="1">
    <location>
        <position position="92"/>
    </location>
    <ligand>
        <name>Ca(2+)</name>
        <dbReference type="ChEBI" id="CHEBI:29108"/>
    </ligand>
</feature>
<feature type="binding site" evidence="1">
    <location>
        <position position="99"/>
    </location>
    <ligand>
        <name>Ca(2+)</name>
        <dbReference type="ChEBI" id="CHEBI:29108"/>
    </ligand>
</feature>
<feature type="modified residue" description="N-acetylalanine" evidence="4">
    <location>
        <position position="2"/>
    </location>
</feature>
<feature type="modified residue" description="Phosphoserine" evidence="3">
    <location>
        <position position="66"/>
    </location>
</feature>
<feature type="modified residue" description="Phosphoserine" evidence="3">
    <location>
        <position position="67"/>
    </location>
</feature>
<reference key="1">
    <citation type="journal article" date="1987" name="J. Cell Biol.">
        <title>Isolation and characterization of the gene for myosin light chain two of Drosophila melanogaster.</title>
        <authorList>
            <person name="Toffenetti J."/>
            <person name="Mischke D."/>
            <person name="Pardue M.L."/>
        </authorList>
    </citation>
    <scope>NUCLEOTIDE SEQUENCE [MRNA]</scope>
    <scope>ACETYLATION AT ALA-2</scope>
    <source>
        <tissue>Embryo</tissue>
    </source>
</reference>
<reference key="2">
    <citation type="journal article" date="1985" name="Mol. Cell. Biol.">
        <title>Characterization of the myosin light-chain-2 gene of Drosophila melanogaster.</title>
        <authorList>
            <person name="Parker V.P."/>
            <person name="Falkenthal S."/>
            <person name="Davidson N."/>
        </authorList>
    </citation>
    <scope>NUCLEOTIDE SEQUENCE [GENOMIC DNA]</scope>
    <source>
        <tissue>Pupae</tissue>
    </source>
</reference>
<reference key="3">
    <citation type="journal article" date="2000" name="Science">
        <title>The genome sequence of Drosophila melanogaster.</title>
        <authorList>
            <person name="Adams M.D."/>
            <person name="Celniker S.E."/>
            <person name="Holt R.A."/>
            <person name="Evans C.A."/>
            <person name="Gocayne J.D."/>
            <person name="Amanatides P.G."/>
            <person name="Scherer S.E."/>
            <person name="Li P.W."/>
            <person name="Hoskins R.A."/>
            <person name="Galle R.F."/>
            <person name="George R.A."/>
            <person name="Lewis S.E."/>
            <person name="Richards S."/>
            <person name="Ashburner M."/>
            <person name="Henderson S.N."/>
            <person name="Sutton G.G."/>
            <person name="Wortman J.R."/>
            <person name="Yandell M.D."/>
            <person name="Zhang Q."/>
            <person name="Chen L.X."/>
            <person name="Brandon R.C."/>
            <person name="Rogers Y.-H.C."/>
            <person name="Blazej R.G."/>
            <person name="Champe M."/>
            <person name="Pfeiffer B.D."/>
            <person name="Wan K.H."/>
            <person name="Doyle C."/>
            <person name="Baxter E.G."/>
            <person name="Helt G."/>
            <person name="Nelson C.R."/>
            <person name="Miklos G.L.G."/>
            <person name="Abril J.F."/>
            <person name="Agbayani A."/>
            <person name="An H.-J."/>
            <person name="Andrews-Pfannkoch C."/>
            <person name="Baldwin D."/>
            <person name="Ballew R.M."/>
            <person name="Basu A."/>
            <person name="Baxendale J."/>
            <person name="Bayraktaroglu L."/>
            <person name="Beasley E.M."/>
            <person name="Beeson K.Y."/>
            <person name="Benos P.V."/>
            <person name="Berman B.P."/>
            <person name="Bhandari D."/>
            <person name="Bolshakov S."/>
            <person name="Borkova D."/>
            <person name="Botchan M.R."/>
            <person name="Bouck J."/>
            <person name="Brokstein P."/>
            <person name="Brottier P."/>
            <person name="Burtis K.C."/>
            <person name="Busam D.A."/>
            <person name="Butler H."/>
            <person name="Cadieu E."/>
            <person name="Center A."/>
            <person name="Chandra I."/>
            <person name="Cherry J.M."/>
            <person name="Cawley S."/>
            <person name="Dahlke C."/>
            <person name="Davenport L.B."/>
            <person name="Davies P."/>
            <person name="de Pablos B."/>
            <person name="Delcher A."/>
            <person name="Deng Z."/>
            <person name="Mays A.D."/>
            <person name="Dew I."/>
            <person name="Dietz S.M."/>
            <person name="Dodson K."/>
            <person name="Doup L.E."/>
            <person name="Downes M."/>
            <person name="Dugan-Rocha S."/>
            <person name="Dunkov B.C."/>
            <person name="Dunn P."/>
            <person name="Durbin K.J."/>
            <person name="Evangelista C.C."/>
            <person name="Ferraz C."/>
            <person name="Ferriera S."/>
            <person name="Fleischmann W."/>
            <person name="Fosler C."/>
            <person name="Gabrielian A.E."/>
            <person name="Garg N.S."/>
            <person name="Gelbart W.M."/>
            <person name="Glasser K."/>
            <person name="Glodek A."/>
            <person name="Gong F."/>
            <person name="Gorrell J.H."/>
            <person name="Gu Z."/>
            <person name="Guan P."/>
            <person name="Harris M."/>
            <person name="Harris N.L."/>
            <person name="Harvey D.A."/>
            <person name="Heiman T.J."/>
            <person name="Hernandez J.R."/>
            <person name="Houck J."/>
            <person name="Hostin D."/>
            <person name="Houston K.A."/>
            <person name="Howland T.J."/>
            <person name="Wei M.-H."/>
            <person name="Ibegwam C."/>
            <person name="Jalali M."/>
            <person name="Kalush F."/>
            <person name="Karpen G.H."/>
            <person name="Ke Z."/>
            <person name="Kennison J.A."/>
            <person name="Ketchum K.A."/>
            <person name="Kimmel B.E."/>
            <person name="Kodira C.D."/>
            <person name="Kraft C.L."/>
            <person name="Kravitz S."/>
            <person name="Kulp D."/>
            <person name="Lai Z."/>
            <person name="Lasko P."/>
            <person name="Lei Y."/>
            <person name="Levitsky A.A."/>
            <person name="Li J.H."/>
            <person name="Li Z."/>
            <person name="Liang Y."/>
            <person name="Lin X."/>
            <person name="Liu X."/>
            <person name="Mattei B."/>
            <person name="McIntosh T.C."/>
            <person name="McLeod M.P."/>
            <person name="McPherson D."/>
            <person name="Merkulov G."/>
            <person name="Milshina N.V."/>
            <person name="Mobarry C."/>
            <person name="Morris J."/>
            <person name="Moshrefi A."/>
            <person name="Mount S.M."/>
            <person name="Moy M."/>
            <person name="Murphy B."/>
            <person name="Murphy L."/>
            <person name="Muzny D.M."/>
            <person name="Nelson D.L."/>
            <person name="Nelson D.R."/>
            <person name="Nelson K.A."/>
            <person name="Nixon K."/>
            <person name="Nusskern D.R."/>
            <person name="Pacleb J.M."/>
            <person name="Palazzolo M."/>
            <person name="Pittman G.S."/>
            <person name="Pan S."/>
            <person name="Pollard J."/>
            <person name="Puri V."/>
            <person name="Reese M.G."/>
            <person name="Reinert K."/>
            <person name="Remington K."/>
            <person name="Saunders R.D.C."/>
            <person name="Scheeler F."/>
            <person name="Shen H."/>
            <person name="Shue B.C."/>
            <person name="Siden-Kiamos I."/>
            <person name="Simpson M."/>
            <person name="Skupski M.P."/>
            <person name="Smith T.J."/>
            <person name="Spier E."/>
            <person name="Spradling A.C."/>
            <person name="Stapleton M."/>
            <person name="Strong R."/>
            <person name="Sun E."/>
            <person name="Svirskas R."/>
            <person name="Tector C."/>
            <person name="Turner R."/>
            <person name="Venter E."/>
            <person name="Wang A.H."/>
            <person name="Wang X."/>
            <person name="Wang Z.-Y."/>
            <person name="Wassarman D.A."/>
            <person name="Weinstock G.M."/>
            <person name="Weissenbach J."/>
            <person name="Williams S.M."/>
            <person name="Woodage T."/>
            <person name="Worley K.C."/>
            <person name="Wu D."/>
            <person name="Yang S."/>
            <person name="Yao Q.A."/>
            <person name="Ye J."/>
            <person name="Yeh R.-F."/>
            <person name="Zaveri J.S."/>
            <person name="Zhan M."/>
            <person name="Zhang G."/>
            <person name="Zhao Q."/>
            <person name="Zheng L."/>
            <person name="Zheng X.H."/>
            <person name="Zhong F.N."/>
            <person name="Zhong W."/>
            <person name="Zhou X."/>
            <person name="Zhu S.C."/>
            <person name="Zhu X."/>
            <person name="Smith H.O."/>
            <person name="Gibbs R.A."/>
            <person name="Myers E.W."/>
            <person name="Rubin G.M."/>
            <person name="Venter J.C."/>
        </authorList>
    </citation>
    <scope>NUCLEOTIDE SEQUENCE [LARGE SCALE GENOMIC DNA]</scope>
    <source>
        <strain>Berkeley</strain>
    </source>
</reference>
<reference key="4">
    <citation type="journal article" date="2002" name="Genome Biol.">
        <title>Annotation of the Drosophila melanogaster euchromatic genome: a systematic review.</title>
        <authorList>
            <person name="Misra S."/>
            <person name="Crosby M.A."/>
            <person name="Mungall C.J."/>
            <person name="Matthews B.B."/>
            <person name="Campbell K.S."/>
            <person name="Hradecky P."/>
            <person name="Huang Y."/>
            <person name="Kaminker J.S."/>
            <person name="Millburn G.H."/>
            <person name="Prochnik S.E."/>
            <person name="Smith C.D."/>
            <person name="Tupy J.L."/>
            <person name="Whitfield E.J."/>
            <person name="Bayraktaroglu L."/>
            <person name="Berman B.P."/>
            <person name="Bettencourt B.R."/>
            <person name="Celniker S.E."/>
            <person name="de Grey A.D.N.J."/>
            <person name="Drysdale R.A."/>
            <person name="Harris N.L."/>
            <person name="Richter J."/>
            <person name="Russo S."/>
            <person name="Schroeder A.J."/>
            <person name="Shu S.Q."/>
            <person name="Stapleton M."/>
            <person name="Yamada C."/>
            <person name="Ashburner M."/>
            <person name="Gelbart W.M."/>
            <person name="Rubin G.M."/>
            <person name="Lewis S.E."/>
        </authorList>
    </citation>
    <scope>GENOME REANNOTATION</scope>
    <source>
        <strain>Berkeley</strain>
    </source>
</reference>
<reference key="5">
    <citation type="journal article" date="2002" name="Genome Biol.">
        <title>A Drosophila full-length cDNA resource.</title>
        <authorList>
            <person name="Stapleton M."/>
            <person name="Carlson J.W."/>
            <person name="Brokstein P."/>
            <person name="Yu C."/>
            <person name="Champe M."/>
            <person name="George R.A."/>
            <person name="Guarin H."/>
            <person name="Kronmiller B."/>
            <person name="Pacleb J.M."/>
            <person name="Park S."/>
            <person name="Wan K.H."/>
            <person name="Rubin G.M."/>
            <person name="Celniker S.E."/>
        </authorList>
    </citation>
    <scope>NUCLEOTIDE SEQUENCE [LARGE SCALE MRNA]</scope>
    <source>
        <strain>Berkeley</strain>
        <tissue>Embryo</tissue>
    </source>
</reference>
<reference key="6">
    <citation type="journal article" date="2008" name="J. Proteome Res.">
        <title>Phosphoproteome analysis of Drosophila melanogaster embryos.</title>
        <authorList>
            <person name="Zhai B."/>
            <person name="Villen J."/>
            <person name="Beausoleil S.A."/>
            <person name="Mintseris J."/>
            <person name="Gygi S.P."/>
        </authorList>
    </citation>
    <scope>PHOSPHORYLATION [LARGE SCALE ANALYSIS] AT SER-66 AND SER-67</scope>
    <scope>IDENTIFICATION BY MASS SPECTROMETRY</scope>
    <source>
        <tissue>Embryo</tissue>
    </source>
</reference>
<dbReference type="EMBL" id="M28643">
    <property type="protein sequence ID" value="AAA28576.1"/>
    <property type="molecule type" value="mRNA"/>
</dbReference>
<dbReference type="EMBL" id="M11947">
    <property type="protein sequence ID" value="AAA51466.1"/>
    <property type="molecule type" value="Genomic_DNA"/>
</dbReference>
<dbReference type="EMBL" id="AE014297">
    <property type="protein sequence ID" value="AAF57016.1"/>
    <property type="molecule type" value="Genomic_DNA"/>
</dbReference>
<dbReference type="EMBL" id="AY060369">
    <property type="protein sequence ID" value="AAL25408.1"/>
    <property type="molecule type" value="mRNA"/>
</dbReference>
<dbReference type="PIR" id="A27270">
    <property type="entry name" value="A27270"/>
</dbReference>
<dbReference type="RefSeq" id="NP_524586.1">
    <property type="nucleotide sequence ID" value="NM_079847.3"/>
</dbReference>
<dbReference type="SMR" id="P18432"/>
<dbReference type="BioGRID" id="68443">
    <property type="interactions" value="63"/>
</dbReference>
<dbReference type="DIP" id="DIP-19462N"/>
<dbReference type="FunCoup" id="P18432">
    <property type="interactions" value="12"/>
</dbReference>
<dbReference type="IntAct" id="P18432">
    <property type="interactions" value="97"/>
</dbReference>
<dbReference type="STRING" id="7227.FBpp0088688"/>
<dbReference type="GlyGen" id="P18432">
    <property type="glycosylation" value="2 sites"/>
</dbReference>
<dbReference type="iPTMnet" id="P18432"/>
<dbReference type="PaxDb" id="7227-FBpp0088688"/>
<dbReference type="DNASU" id="43587"/>
<dbReference type="EnsemblMetazoa" id="FBtr0089747">
    <property type="protein sequence ID" value="FBpp0088688"/>
    <property type="gene ID" value="FBgn0002773"/>
</dbReference>
<dbReference type="GeneID" id="43587"/>
<dbReference type="KEGG" id="dme:Dmel_CG2184"/>
<dbReference type="AGR" id="FB:FBgn0002773"/>
<dbReference type="CTD" id="43587"/>
<dbReference type="FlyBase" id="FBgn0002773">
    <property type="gene designation" value="Mlc2"/>
</dbReference>
<dbReference type="VEuPathDB" id="VectorBase:FBgn0002773"/>
<dbReference type="eggNOG" id="KOG0031">
    <property type="taxonomic scope" value="Eukaryota"/>
</dbReference>
<dbReference type="HOGENOM" id="CLU_061288_9_1_1"/>
<dbReference type="InParanoid" id="P18432"/>
<dbReference type="OMA" id="ALTHWGQ"/>
<dbReference type="OrthoDB" id="429467at2759"/>
<dbReference type="PhylomeDB" id="P18432"/>
<dbReference type="Reactome" id="R-DME-445355">
    <property type="pathway name" value="Smooth Muscle Contraction"/>
</dbReference>
<dbReference type="Reactome" id="R-DME-5627123">
    <property type="pathway name" value="RHO GTPases activate PAKs"/>
</dbReference>
<dbReference type="SignaLink" id="P18432"/>
<dbReference type="BioGRID-ORCS" id="43587">
    <property type="hits" value="0 hits in 3 CRISPR screens"/>
</dbReference>
<dbReference type="ChiTaRS" id="Mlc2">
    <property type="organism name" value="fly"/>
</dbReference>
<dbReference type="GenomeRNAi" id="43587"/>
<dbReference type="PRO" id="PR:P18432"/>
<dbReference type="Proteomes" id="UP000000803">
    <property type="component" value="Chromosome 3R"/>
</dbReference>
<dbReference type="Bgee" id="FBgn0002773">
    <property type="expression patterns" value="Expressed in oviduct (Drosophila) and 185 other cell types or tissues"/>
</dbReference>
<dbReference type="ExpressionAtlas" id="P18432">
    <property type="expression patterns" value="baseline and differential"/>
</dbReference>
<dbReference type="GO" id="GO:0005737">
    <property type="term" value="C:cytoplasm"/>
    <property type="evidence" value="ECO:0000318"/>
    <property type="project" value="GO_Central"/>
</dbReference>
<dbReference type="GO" id="GO:0030016">
    <property type="term" value="C:myofibril"/>
    <property type="evidence" value="ECO:0000315"/>
    <property type="project" value="FlyBase"/>
</dbReference>
<dbReference type="GO" id="GO:0016460">
    <property type="term" value="C:myosin II complex"/>
    <property type="evidence" value="ECO:0000318"/>
    <property type="project" value="GO_Central"/>
</dbReference>
<dbReference type="GO" id="GO:0005509">
    <property type="term" value="F:calcium ion binding"/>
    <property type="evidence" value="ECO:0007669"/>
    <property type="project" value="InterPro"/>
</dbReference>
<dbReference type="GO" id="GO:0032036">
    <property type="term" value="F:myosin heavy chain binding"/>
    <property type="evidence" value="ECO:0000318"/>
    <property type="project" value="GO_Central"/>
</dbReference>
<dbReference type="GO" id="GO:0060361">
    <property type="term" value="P:flight"/>
    <property type="evidence" value="ECO:0000315"/>
    <property type="project" value="FlyBase"/>
</dbReference>
<dbReference type="GO" id="GO:0040011">
    <property type="term" value="P:locomotion"/>
    <property type="evidence" value="ECO:0000318"/>
    <property type="project" value="GO_Central"/>
</dbReference>
<dbReference type="GO" id="GO:0003012">
    <property type="term" value="P:muscle system process"/>
    <property type="evidence" value="ECO:0000315"/>
    <property type="project" value="FlyBase"/>
</dbReference>
<dbReference type="GO" id="GO:0030239">
    <property type="term" value="P:myofibril assembly"/>
    <property type="evidence" value="ECO:0000315"/>
    <property type="project" value="FlyBase"/>
</dbReference>
<dbReference type="GO" id="GO:0009791">
    <property type="term" value="P:post-embryonic development"/>
    <property type="evidence" value="ECO:0000318"/>
    <property type="project" value="GO_Central"/>
</dbReference>
<dbReference type="FunFam" id="1.10.238.10:FF:000425">
    <property type="entry name" value="Myosin light chain 2"/>
    <property type="match status" value="1"/>
</dbReference>
<dbReference type="Gene3D" id="1.10.238.10">
    <property type="entry name" value="EF-hand"/>
    <property type="match status" value="2"/>
</dbReference>
<dbReference type="InterPro" id="IPR011992">
    <property type="entry name" value="EF-hand-dom_pair"/>
</dbReference>
<dbReference type="InterPro" id="IPR018247">
    <property type="entry name" value="EF_Hand_1_Ca_BS"/>
</dbReference>
<dbReference type="InterPro" id="IPR002048">
    <property type="entry name" value="EF_hand_dom"/>
</dbReference>
<dbReference type="InterPro" id="IPR050403">
    <property type="entry name" value="Myosin_RLC"/>
</dbReference>
<dbReference type="PANTHER" id="PTHR23049">
    <property type="entry name" value="MYOSIN REGULATORY LIGHT CHAIN 2"/>
    <property type="match status" value="1"/>
</dbReference>
<dbReference type="Pfam" id="PF13405">
    <property type="entry name" value="EF-hand_6"/>
    <property type="match status" value="1"/>
</dbReference>
<dbReference type="SMART" id="SM00054">
    <property type="entry name" value="EFh"/>
    <property type="match status" value="2"/>
</dbReference>
<dbReference type="SUPFAM" id="SSF47473">
    <property type="entry name" value="EF-hand"/>
    <property type="match status" value="1"/>
</dbReference>
<dbReference type="PROSITE" id="PS00018">
    <property type="entry name" value="EF_HAND_1"/>
    <property type="match status" value="1"/>
</dbReference>
<dbReference type="PROSITE" id="PS50222">
    <property type="entry name" value="EF_HAND_2"/>
    <property type="match status" value="3"/>
</dbReference>